<evidence type="ECO:0000250" key="1">
    <source>
        <dbReference type="UniProtKB" id="Q9LIR6"/>
    </source>
</evidence>
<evidence type="ECO:0000256" key="2">
    <source>
        <dbReference type="SAM" id="MobiDB-lite"/>
    </source>
</evidence>
<evidence type="ECO:0000269" key="3">
    <source ref="1"/>
</evidence>
<evidence type="ECO:0000305" key="4"/>
<organism>
    <name type="scientific">Arabidopsis thaliana</name>
    <name type="common">Mouse-ear cress</name>
    <dbReference type="NCBI Taxonomy" id="3702"/>
    <lineage>
        <taxon>Eukaryota</taxon>
        <taxon>Viridiplantae</taxon>
        <taxon>Streptophyta</taxon>
        <taxon>Embryophyta</taxon>
        <taxon>Tracheophyta</taxon>
        <taxon>Spermatophyta</taxon>
        <taxon>Magnoliopsida</taxon>
        <taxon>eudicotyledons</taxon>
        <taxon>Gunneridae</taxon>
        <taxon>Pentapetalae</taxon>
        <taxon>rosids</taxon>
        <taxon>malvids</taxon>
        <taxon>Brassicales</taxon>
        <taxon>Brassicaceae</taxon>
        <taxon>Camelineae</taxon>
        <taxon>Arabidopsis</taxon>
    </lineage>
</organism>
<proteinExistence type="evidence at transcript level"/>
<reference key="1">
    <citation type="journal article" date="2001" name="Plant Sci.">
        <title>A novel putative beta-amylase gene and ATbeta-Amy from Arabidopsis thaliana are circadian regulated.</title>
        <authorList>
            <person name="Chandler J.W."/>
            <person name="Apel K."/>
            <person name="Melzer S."/>
        </authorList>
    </citation>
    <scope>NUCLEOTIDE SEQUENCE [MRNA]</scope>
    <scope>TISSUE SPECIFICITY</scope>
    <scope>INDUCTION</scope>
    <source>
        <strain>cv. Landsberg erecta</strain>
    </source>
</reference>
<reference key="2">
    <citation type="journal article" date="2000" name="Nature">
        <title>Sequence and analysis of chromosome 5 of the plant Arabidopsis thaliana.</title>
        <authorList>
            <person name="Tabata S."/>
            <person name="Kaneko T."/>
            <person name="Nakamura Y."/>
            <person name="Kotani H."/>
            <person name="Kato T."/>
            <person name="Asamizu E."/>
            <person name="Miyajima N."/>
            <person name="Sasamoto S."/>
            <person name="Kimura T."/>
            <person name="Hosouchi T."/>
            <person name="Kawashima K."/>
            <person name="Kohara M."/>
            <person name="Matsumoto M."/>
            <person name="Matsuno A."/>
            <person name="Muraki A."/>
            <person name="Nakayama S."/>
            <person name="Nakazaki N."/>
            <person name="Naruo K."/>
            <person name="Okumura S."/>
            <person name="Shinpo S."/>
            <person name="Takeuchi C."/>
            <person name="Wada T."/>
            <person name="Watanabe A."/>
            <person name="Yamada M."/>
            <person name="Yasuda M."/>
            <person name="Sato S."/>
            <person name="de la Bastide M."/>
            <person name="Huang E."/>
            <person name="Spiegel L."/>
            <person name="Gnoj L."/>
            <person name="O'Shaughnessy A."/>
            <person name="Preston R."/>
            <person name="Habermann K."/>
            <person name="Murray J."/>
            <person name="Johnson D."/>
            <person name="Rohlfing T."/>
            <person name="Nelson J."/>
            <person name="Stoneking T."/>
            <person name="Pepin K."/>
            <person name="Spieth J."/>
            <person name="Sekhon M."/>
            <person name="Armstrong J."/>
            <person name="Becker M."/>
            <person name="Belter E."/>
            <person name="Cordum H."/>
            <person name="Cordes M."/>
            <person name="Courtney L."/>
            <person name="Courtney W."/>
            <person name="Dante M."/>
            <person name="Du H."/>
            <person name="Edwards J."/>
            <person name="Fryman J."/>
            <person name="Haakensen B."/>
            <person name="Lamar E."/>
            <person name="Latreille P."/>
            <person name="Leonard S."/>
            <person name="Meyer R."/>
            <person name="Mulvaney E."/>
            <person name="Ozersky P."/>
            <person name="Riley A."/>
            <person name="Strowmatt C."/>
            <person name="Wagner-McPherson C."/>
            <person name="Wollam A."/>
            <person name="Yoakum M."/>
            <person name="Bell M."/>
            <person name="Dedhia N."/>
            <person name="Parnell L."/>
            <person name="Shah R."/>
            <person name="Rodriguez M."/>
            <person name="Hoon See L."/>
            <person name="Vil D."/>
            <person name="Baker J."/>
            <person name="Kirchoff K."/>
            <person name="Toth K."/>
            <person name="King L."/>
            <person name="Bahret A."/>
            <person name="Miller B."/>
            <person name="Marra M.A."/>
            <person name="Martienssen R."/>
            <person name="McCombie W.R."/>
            <person name="Wilson R.K."/>
            <person name="Murphy G."/>
            <person name="Bancroft I."/>
            <person name="Volckaert G."/>
            <person name="Wambutt R."/>
            <person name="Duesterhoeft A."/>
            <person name="Stiekema W."/>
            <person name="Pohl T."/>
            <person name="Entian K.-D."/>
            <person name="Terryn N."/>
            <person name="Hartley N."/>
            <person name="Bent E."/>
            <person name="Johnson S."/>
            <person name="Langham S.-A."/>
            <person name="McCullagh B."/>
            <person name="Robben J."/>
            <person name="Grymonprez B."/>
            <person name="Zimmermann W."/>
            <person name="Ramsperger U."/>
            <person name="Wedler H."/>
            <person name="Balke K."/>
            <person name="Wedler E."/>
            <person name="Peters S."/>
            <person name="van Staveren M."/>
            <person name="Dirkse W."/>
            <person name="Mooijman P."/>
            <person name="Klein Lankhorst R."/>
            <person name="Weitzenegger T."/>
            <person name="Bothe G."/>
            <person name="Rose M."/>
            <person name="Hauf J."/>
            <person name="Berneiser S."/>
            <person name="Hempel S."/>
            <person name="Feldpausch M."/>
            <person name="Lamberth S."/>
            <person name="Villarroel R."/>
            <person name="Gielen J."/>
            <person name="Ardiles W."/>
            <person name="Bents O."/>
            <person name="Lemcke K."/>
            <person name="Kolesov G."/>
            <person name="Mayer K.F.X."/>
            <person name="Rudd S."/>
            <person name="Schoof H."/>
            <person name="Schueller C."/>
            <person name="Zaccaria P."/>
            <person name="Mewes H.-W."/>
            <person name="Bevan M."/>
            <person name="Fransz P.F."/>
        </authorList>
    </citation>
    <scope>NUCLEOTIDE SEQUENCE [LARGE SCALE GENOMIC DNA]</scope>
    <source>
        <strain>cv. Columbia</strain>
    </source>
</reference>
<reference key="3">
    <citation type="journal article" date="2017" name="Plant J.">
        <title>Araport11: a complete reannotation of the Arabidopsis thaliana reference genome.</title>
        <authorList>
            <person name="Cheng C.Y."/>
            <person name="Krishnakumar V."/>
            <person name="Chan A.P."/>
            <person name="Thibaud-Nissen F."/>
            <person name="Schobel S."/>
            <person name="Town C.D."/>
        </authorList>
    </citation>
    <scope>GENOME REANNOTATION</scope>
    <source>
        <strain>cv. Columbia</strain>
    </source>
</reference>
<reference key="4">
    <citation type="journal article" date="2003" name="Science">
        <title>Empirical analysis of transcriptional activity in the Arabidopsis genome.</title>
        <authorList>
            <person name="Yamada K."/>
            <person name="Lim J."/>
            <person name="Dale J.M."/>
            <person name="Chen H."/>
            <person name="Shinn P."/>
            <person name="Palm C.J."/>
            <person name="Southwick A.M."/>
            <person name="Wu H.C."/>
            <person name="Kim C.J."/>
            <person name="Nguyen M."/>
            <person name="Pham P.K."/>
            <person name="Cheuk R.F."/>
            <person name="Karlin-Newmann G."/>
            <person name="Liu S.X."/>
            <person name="Lam B."/>
            <person name="Sakano H."/>
            <person name="Wu T."/>
            <person name="Yu G."/>
            <person name="Miranda M."/>
            <person name="Quach H.L."/>
            <person name="Tripp M."/>
            <person name="Chang C.H."/>
            <person name="Lee J.M."/>
            <person name="Toriumi M.J."/>
            <person name="Chan M.M."/>
            <person name="Tang C.C."/>
            <person name="Onodera C.S."/>
            <person name="Deng J.M."/>
            <person name="Akiyama K."/>
            <person name="Ansari Y."/>
            <person name="Arakawa T."/>
            <person name="Banh J."/>
            <person name="Banno F."/>
            <person name="Bowser L."/>
            <person name="Brooks S.Y."/>
            <person name="Carninci P."/>
            <person name="Chao Q."/>
            <person name="Choy N."/>
            <person name="Enju A."/>
            <person name="Goldsmith A.D."/>
            <person name="Gurjal M."/>
            <person name="Hansen N.F."/>
            <person name="Hayashizaki Y."/>
            <person name="Johnson-Hopson C."/>
            <person name="Hsuan V.W."/>
            <person name="Iida K."/>
            <person name="Karnes M."/>
            <person name="Khan S."/>
            <person name="Koesema E."/>
            <person name="Ishida J."/>
            <person name="Jiang P.X."/>
            <person name="Jones T."/>
            <person name="Kawai J."/>
            <person name="Kamiya A."/>
            <person name="Meyers C."/>
            <person name="Nakajima M."/>
            <person name="Narusaka M."/>
            <person name="Seki M."/>
            <person name="Sakurai T."/>
            <person name="Satou M."/>
            <person name="Tamse R."/>
            <person name="Vaysberg M."/>
            <person name="Wallender E.K."/>
            <person name="Wong C."/>
            <person name="Yamamura Y."/>
            <person name="Yuan S."/>
            <person name="Shinozaki K."/>
            <person name="Davis R.W."/>
            <person name="Theologis A."/>
            <person name="Ecker J.R."/>
        </authorList>
    </citation>
    <scope>NUCLEOTIDE SEQUENCE [LARGE SCALE MRNA]</scope>
    <source>
        <strain>cv. Columbia</strain>
    </source>
</reference>
<reference key="5">
    <citation type="submission" date="2002-03" db="EMBL/GenBank/DDBJ databases">
        <title>Full-length cDNA from Arabidopsis thaliana.</title>
        <authorList>
            <person name="Brover V.V."/>
            <person name="Troukhan M.E."/>
            <person name="Alexandrov N.A."/>
            <person name="Lu Y.-P."/>
            <person name="Flavell R.B."/>
            <person name="Feldmann K.A."/>
        </authorList>
    </citation>
    <scope>NUCLEOTIDE SEQUENCE [LARGE SCALE MRNA]</scope>
</reference>
<reference key="6">
    <citation type="journal article" date="2008" name="Plant Cell">
        <title>Beta-AMYLASE4, a noncatalytic protein required for starch breakdown, acts upstream of three active beta-amylases in Arabidopsis chloroplasts.</title>
        <authorList>
            <person name="Fulton D.C."/>
            <person name="Stettler M."/>
            <person name="Mettler T."/>
            <person name="Vaughan C.K."/>
            <person name="Li J."/>
            <person name="Francisco P."/>
            <person name="Gil M."/>
            <person name="Reinhold H."/>
            <person name="Eicke S."/>
            <person name="Messerli G."/>
            <person name="Dorken G."/>
            <person name="Halliday K."/>
            <person name="Smith A.M."/>
            <person name="Smith S.M."/>
            <person name="Zeeman S.C."/>
        </authorList>
    </citation>
    <scope>GENE FAMILY</scope>
    <scope>NOMENCLATURE</scope>
</reference>
<accession>Q8VYW2</accession>
<accession>Q946D4</accession>
<keyword id="KW-0119">Carbohydrate metabolism</keyword>
<keyword id="KW-0963">Cytoplasm</keyword>
<keyword id="KW-0597">Phosphoprotein</keyword>
<keyword id="KW-0624">Polysaccharide degradation</keyword>
<keyword id="KW-1185">Reference proteome</keyword>
<protein>
    <recommendedName>
        <fullName>Inactive beta-amylase 9</fullName>
    </recommendedName>
    <alternativeName>
        <fullName>1,4-alpha-D-glucan maltohydrolase</fullName>
    </alternativeName>
    <alternativeName>
        <fullName>Inactive beta-amylase 3</fullName>
    </alternativeName>
</protein>
<feature type="chain" id="PRO_0000393423" description="Inactive beta-amylase 9">
    <location>
        <begin position="1"/>
        <end position="536"/>
    </location>
</feature>
<feature type="region of interest" description="Disordered" evidence="2">
    <location>
        <begin position="511"/>
        <end position="536"/>
    </location>
</feature>
<feature type="modified residue" description="Phosphoserine" evidence="1">
    <location>
        <position position="47"/>
    </location>
</feature>
<feature type="sequence conflict" description="In Ref. 1; AAK85300." evidence="4" ref="1">
    <original>DD</original>
    <variation>GA</variation>
    <location>
        <begin position="69"/>
        <end position="70"/>
    </location>
</feature>
<feature type="sequence conflict" description="In Ref. 1; AAK85300." evidence="4" ref="1">
    <original>QG</original>
    <variation>RKA</variation>
    <location>
        <begin position="442"/>
        <end position="443"/>
    </location>
</feature>
<sequence>MEVSVIGNPQARICRAELAYRELGFRFGSDVISGESRNRVSFCNQSSKWKEIAIRCSSRSVKCEAIVSDDASPFLKSTPKSKSLESVKLFVGLPLDTVSDCNNVNHLKAITAGLKALKLLGVEGIELPIFWGVVEKEAAGKYEWSGYLAVAEIVKKVGLKLHASLSFHGSKQTEIGLPDWVAKIGDAEPGIYFTDRYGQQYKDCLSFAVDDVPVLDGKTPMEVYRGFCESFKSAFADYMGNTITGITLGLGPDGELKYPSHQHNAKLSGAGEFQCYDKHMLSALKGYAESTGNPLWGLGGPHDAPAYDQQPNSSSFFSDGGSWESQYGDFFLSWYSSLLTSHADRVLSVASSAFSGIGVPLCGKLPLLHQWHKLRSHPSELTAGFYSSNGQDRYEAIAEIFAKNSCRMIIPGMDLSDEHQSPESLSSPESLLGHIKTSCKKQGVVVSGQNSSTPVPGGFERIVENLKDENVGIDLFTYQRMGALFFSPEHFHAFTVFVRNLSQFELSSDDQASEAEVEAETASIGSGTGAPSLQTA</sequence>
<comment type="subcellular location">
    <subcellularLocation>
        <location evidence="4">Cytoplasm</location>
    </subcellularLocation>
</comment>
<comment type="tissue specificity">
    <text evidence="3">Mostly expressed in young floral buds, flowers and roots, and, to a later extent, in stems and leaves.</text>
</comment>
<comment type="induction">
    <text evidence="3">Circadian-regulated, with a peak in expression just before the light period in short day conditions.</text>
</comment>
<comment type="similarity">
    <text evidence="4">Belongs to the glycosyl hydrolase 14 family.</text>
</comment>
<comment type="caution">
    <text evidence="4">In contrast to other members of the family, lacks the conserved Glu active site in position 449, which is replaced by a Gln residue, suggesting it is inactive.</text>
</comment>
<name>BAM9_ARATH</name>
<dbReference type="EMBL" id="AF402598">
    <property type="protein sequence ID" value="AAK85300.1"/>
    <property type="molecule type" value="mRNA"/>
</dbReference>
<dbReference type="EMBL" id="AC051627">
    <property type="status" value="NOT_ANNOTATED_CDS"/>
    <property type="molecule type" value="Genomic_DNA"/>
</dbReference>
<dbReference type="EMBL" id="CP002688">
    <property type="protein sequence ID" value="AED92597.1"/>
    <property type="molecule type" value="Genomic_DNA"/>
</dbReference>
<dbReference type="EMBL" id="AY069879">
    <property type="protein sequence ID" value="AAL47434.1"/>
    <property type="molecule type" value="mRNA"/>
</dbReference>
<dbReference type="EMBL" id="AY142007">
    <property type="protein sequence ID" value="AAM98271.1"/>
    <property type="molecule type" value="mRNA"/>
</dbReference>
<dbReference type="EMBL" id="AY087036">
    <property type="protein sequence ID" value="AAM64597.1"/>
    <property type="molecule type" value="mRNA"/>
</dbReference>
<dbReference type="RefSeq" id="NP_197368.1">
    <property type="nucleotide sequence ID" value="NM_121872.3"/>
</dbReference>
<dbReference type="SASBDB" id="Q8VYW2"/>
<dbReference type="SMR" id="Q8VYW2"/>
<dbReference type="FunCoup" id="Q8VYW2">
    <property type="interactions" value="87"/>
</dbReference>
<dbReference type="STRING" id="3702.Q8VYW2"/>
<dbReference type="CAZy" id="GH14">
    <property type="family name" value="Glycoside Hydrolase Family 14"/>
</dbReference>
<dbReference type="PaxDb" id="3702-AT5G18670.1"/>
<dbReference type="ProteomicsDB" id="240708"/>
<dbReference type="EnsemblPlants" id="AT5G18670.1">
    <property type="protein sequence ID" value="AT5G18670.1"/>
    <property type="gene ID" value="AT5G18670"/>
</dbReference>
<dbReference type="GeneID" id="831985"/>
<dbReference type="Gramene" id="AT5G18670.1">
    <property type="protein sequence ID" value="AT5G18670.1"/>
    <property type="gene ID" value="AT5G18670"/>
</dbReference>
<dbReference type="KEGG" id="ath:AT5G18670"/>
<dbReference type="Araport" id="AT5G18670"/>
<dbReference type="TAIR" id="AT5G18670">
    <property type="gene designation" value="BMY3"/>
</dbReference>
<dbReference type="eggNOG" id="ENOG502QPTU">
    <property type="taxonomic scope" value="Eukaryota"/>
</dbReference>
<dbReference type="HOGENOM" id="CLU_016754_5_0_1"/>
<dbReference type="InParanoid" id="Q8VYW2"/>
<dbReference type="OMA" id="DCNAVNH"/>
<dbReference type="OrthoDB" id="1660156at2759"/>
<dbReference type="PhylomeDB" id="Q8VYW2"/>
<dbReference type="PRO" id="PR:Q8VYW2"/>
<dbReference type="Proteomes" id="UP000006548">
    <property type="component" value="Chromosome 5"/>
</dbReference>
<dbReference type="ExpressionAtlas" id="Q8VYW2">
    <property type="expression patterns" value="baseline and differential"/>
</dbReference>
<dbReference type="GO" id="GO:0005737">
    <property type="term" value="C:cytoplasm"/>
    <property type="evidence" value="ECO:0007669"/>
    <property type="project" value="UniProtKB-SubCell"/>
</dbReference>
<dbReference type="GO" id="GO:0016161">
    <property type="term" value="F:beta-amylase activity"/>
    <property type="evidence" value="ECO:0007669"/>
    <property type="project" value="InterPro"/>
</dbReference>
<dbReference type="GO" id="GO:0000272">
    <property type="term" value="P:polysaccharide catabolic process"/>
    <property type="evidence" value="ECO:0007669"/>
    <property type="project" value="UniProtKB-KW"/>
</dbReference>
<dbReference type="Gene3D" id="3.20.20.80">
    <property type="entry name" value="Glycosidases"/>
    <property type="match status" value="1"/>
</dbReference>
<dbReference type="InterPro" id="IPR001554">
    <property type="entry name" value="Glyco_hydro_14"/>
</dbReference>
<dbReference type="InterPro" id="IPR017853">
    <property type="entry name" value="Glycoside_hydrolase_SF"/>
</dbReference>
<dbReference type="PANTHER" id="PTHR31352">
    <property type="entry name" value="BETA-AMYLASE 1, CHLOROPLASTIC"/>
    <property type="match status" value="1"/>
</dbReference>
<dbReference type="PANTHER" id="PTHR31352:SF3">
    <property type="entry name" value="INACTIVE BETA-AMYLASE 9"/>
    <property type="match status" value="1"/>
</dbReference>
<dbReference type="Pfam" id="PF01373">
    <property type="entry name" value="Glyco_hydro_14"/>
    <property type="match status" value="1"/>
</dbReference>
<dbReference type="PRINTS" id="PR00750">
    <property type="entry name" value="BETAAMYLASE"/>
</dbReference>
<dbReference type="SUPFAM" id="SSF51445">
    <property type="entry name" value="(Trans)glycosidases"/>
    <property type="match status" value="1"/>
</dbReference>
<gene>
    <name type="primary">BAM9</name>
    <name type="synonym">BMY3</name>
    <name type="ordered locus">At5g18670</name>
    <name type="ORF">T1A4.50</name>
</gene>